<dbReference type="EMBL" id="AL123456">
    <property type="protein sequence ID" value="CCP42997.1"/>
    <property type="molecule type" value="Genomic_DNA"/>
</dbReference>
<dbReference type="RefSeq" id="NP_214782.1">
    <property type="nucleotide sequence ID" value="NC_000962.3"/>
</dbReference>
<dbReference type="RefSeq" id="WP_003401383.1">
    <property type="nucleotide sequence ID" value="NC_000962.3"/>
</dbReference>
<dbReference type="SMR" id="P95225"/>
<dbReference type="STRING" id="83332.Rv0268c"/>
<dbReference type="PaxDb" id="83332-Rv0268c"/>
<dbReference type="DNASU" id="886647"/>
<dbReference type="GeneID" id="886647"/>
<dbReference type="KEGG" id="mtu:Rv0268c"/>
<dbReference type="KEGG" id="mtv:RVBD_0268c"/>
<dbReference type="PATRIC" id="fig|83332.111.peg.300"/>
<dbReference type="TubercuList" id="Rv0268c"/>
<dbReference type="eggNOG" id="COG2161">
    <property type="taxonomic scope" value="Bacteria"/>
</dbReference>
<dbReference type="HOGENOM" id="CLU_1576748_0_0_11"/>
<dbReference type="InParanoid" id="P95225"/>
<dbReference type="Proteomes" id="UP000001584">
    <property type="component" value="Chromosome"/>
</dbReference>
<dbReference type="GO" id="GO:0003700">
    <property type="term" value="F:DNA-binding transcription factor activity"/>
    <property type="evidence" value="ECO:0000318"/>
    <property type="project" value="GO_Central"/>
</dbReference>
<dbReference type="GO" id="GO:0043565">
    <property type="term" value="F:sequence-specific DNA binding"/>
    <property type="evidence" value="ECO:0000318"/>
    <property type="project" value="GO_Central"/>
</dbReference>
<dbReference type="GO" id="GO:0006355">
    <property type="term" value="P:regulation of DNA-templated transcription"/>
    <property type="evidence" value="ECO:0000318"/>
    <property type="project" value="GO_Central"/>
</dbReference>
<dbReference type="Gene3D" id="3.40.1620.10">
    <property type="entry name" value="YefM-like domain"/>
    <property type="match status" value="1"/>
</dbReference>
<dbReference type="InterPro" id="IPR006442">
    <property type="entry name" value="Antitoxin_Phd/YefM"/>
</dbReference>
<dbReference type="InterPro" id="IPR051405">
    <property type="entry name" value="phD/YefM_antitoxin"/>
</dbReference>
<dbReference type="InterPro" id="IPR036165">
    <property type="entry name" value="YefM-like_sf"/>
</dbReference>
<dbReference type="NCBIfam" id="TIGR01552">
    <property type="entry name" value="phd_fam"/>
    <property type="match status" value="1"/>
</dbReference>
<dbReference type="PANTHER" id="PTHR33713:SF10">
    <property type="entry name" value="ANTITOXIN YAFN"/>
    <property type="match status" value="1"/>
</dbReference>
<dbReference type="PANTHER" id="PTHR33713">
    <property type="entry name" value="ANTITOXIN YAFN-RELATED"/>
    <property type="match status" value="1"/>
</dbReference>
<dbReference type="Pfam" id="PF02604">
    <property type="entry name" value="PhdYeFM_antitox"/>
    <property type="match status" value="1"/>
</dbReference>
<dbReference type="SUPFAM" id="SSF143120">
    <property type="entry name" value="YefM-like"/>
    <property type="match status" value="1"/>
</dbReference>
<evidence type="ECO:0000255" key="1"/>
<evidence type="ECO:0000256" key="2">
    <source>
        <dbReference type="SAM" id="MobiDB-lite"/>
    </source>
</evidence>
<evidence type="ECO:0000305" key="3"/>
<evidence type="ECO:0000305" key="4">
    <source>
    </source>
</evidence>
<evidence type="ECO:0000305" key="5">
    <source>
    </source>
</evidence>
<organism>
    <name type="scientific">Mycobacterium tuberculosis (strain ATCC 25618 / H37Rv)</name>
    <dbReference type="NCBI Taxonomy" id="83332"/>
    <lineage>
        <taxon>Bacteria</taxon>
        <taxon>Bacillati</taxon>
        <taxon>Actinomycetota</taxon>
        <taxon>Actinomycetes</taxon>
        <taxon>Mycobacteriales</taxon>
        <taxon>Mycobacteriaceae</taxon>
        <taxon>Mycobacterium</taxon>
        <taxon>Mycobacterium tuberculosis complex</taxon>
    </lineage>
</organism>
<proteinExistence type="inferred from homology"/>
<protein>
    <recommendedName>
        <fullName>Putative antitoxin Rv0268c</fullName>
    </recommendedName>
</protein>
<feature type="chain" id="PRO_0000434894" description="Putative antitoxin Rv0268c">
    <location>
        <begin position="1"/>
        <end position="169"/>
    </location>
</feature>
<feature type="region of interest" description="Disordered" evidence="2">
    <location>
        <begin position="1"/>
        <end position="35"/>
    </location>
</feature>
<feature type="coiled-coil region" evidence="1">
    <location>
        <begin position="120"/>
        <end position="153"/>
    </location>
</feature>
<feature type="compositionally biased region" description="Basic residues" evidence="2">
    <location>
        <begin position="1"/>
        <end position="11"/>
    </location>
</feature>
<name>Y268_MYCTU</name>
<gene>
    <name type="ordered locus">Rv0268c</name>
</gene>
<sequence length="169" mass="19460">MGTRSKSRTRQLKQSNGCTATTSGASDRRRRARRRTAPAWLREDEWLRHHLPHPPRQLSRCLHRRRRSACHHRYSRRTPKGGLPMTSSLVPISEARAHLSRLVRESADDDVVLMNHGRPAAILISAERYESLMEELEDLRDRLSVHEREHVTMPLDKLGAELGVDIGRV</sequence>
<accession>P95225</accession>
<accession>F2GM69</accession>
<accession>I6WXZ2</accession>
<accession>Q7DA49</accession>
<comment type="function">
    <text evidence="4 5">Putative antitoxin component of a type II toxin-antitoxin (TA) system; however the expected toxin coding sequence is not found adjacent to this gene.</text>
</comment>
<comment type="similarity">
    <text evidence="3">Belongs to the phD/YefM antitoxin family.</text>
</comment>
<keyword id="KW-0175">Coiled coil</keyword>
<keyword id="KW-1185">Reference proteome</keyword>
<keyword id="KW-1277">Toxin-antitoxin system</keyword>
<reference key="1">
    <citation type="journal article" date="1998" name="Nature">
        <title>Deciphering the biology of Mycobacterium tuberculosis from the complete genome sequence.</title>
        <authorList>
            <person name="Cole S.T."/>
            <person name="Brosch R."/>
            <person name="Parkhill J."/>
            <person name="Garnier T."/>
            <person name="Churcher C.M."/>
            <person name="Harris D.E."/>
            <person name="Gordon S.V."/>
            <person name="Eiglmeier K."/>
            <person name="Gas S."/>
            <person name="Barry C.E. III"/>
            <person name="Tekaia F."/>
            <person name="Badcock K."/>
            <person name="Basham D."/>
            <person name="Brown D."/>
            <person name="Chillingworth T."/>
            <person name="Connor R."/>
            <person name="Davies R.M."/>
            <person name="Devlin K."/>
            <person name="Feltwell T."/>
            <person name="Gentles S."/>
            <person name="Hamlin N."/>
            <person name="Holroyd S."/>
            <person name="Hornsby T."/>
            <person name="Jagels K."/>
            <person name="Krogh A."/>
            <person name="McLean J."/>
            <person name="Moule S."/>
            <person name="Murphy L.D."/>
            <person name="Oliver S."/>
            <person name="Osborne J."/>
            <person name="Quail M.A."/>
            <person name="Rajandream M.A."/>
            <person name="Rogers J."/>
            <person name="Rutter S."/>
            <person name="Seeger K."/>
            <person name="Skelton S."/>
            <person name="Squares S."/>
            <person name="Squares R."/>
            <person name="Sulston J.E."/>
            <person name="Taylor K."/>
            <person name="Whitehead S."/>
            <person name="Barrell B.G."/>
        </authorList>
    </citation>
    <scope>NUCLEOTIDE SEQUENCE [LARGE SCALE GENOMIC DNA]</scope>
    <source>
        <strain>ATCC 25618 / H37Rv</strain>
    </source>
</reference>
<reference key="2">
    <citation type="journal article" date="2015" name="Tuberculosis">
        <title>Enriching the annotation of Mycobacterium tuberculosis H37Rv proteome using remote homology detection approaches: insights into structure and function.</title>
        <authorList>
            <person name="Ramakrishnan G."/>
            <person name="Ochoa-Montano B."/>
            <person name="Raghavender U.S."/>
            <person name="Mudgal R."/>
            <person name="Joshi A.G."/>
            <person name="Chandra N.R."/>
            <person name="Sowdhamini R."/>
            <person name="Blundell T.L."/>
            <person name="Srinivasan N."/>
        </authorList>
    </citation>
    <scope>DISCUSSION OF POSSIBLE FUNCTION</scope>
    <source>
        <strain>ATCC 25618 / H37Rv</strain>
    </source>
</reference>